<accession>P48259</accession>
<name>YCF27_CYAPA</name>
<dbReference type="EMBL" id="U30821">
    <property type="protein sequence ID" value="AAA81319.1"/>
    <property type="molecule type" value="Genomic_DNA"/>
</dbReference>
<dbReference type="PIR" id="T06976">
    <property type="entry name" value="T06976"/>
</dbReference>
<dbReference type="SMR" id="P48259"/>
<dbReference type="GO" id="GO:0009842">
    <property type="term" value="C:cyanelle"/>
    <property type="evidence" value="ECO:0007669"/>
    <property type="project" value="UniProtKB-SubCell"/>
</dbReference>
<dbReference type="GO" id="GO:0005829">
    <property type="term" value="C:cytosol"/>
    <property type="evidence" value="ECO:0007669"/>
    <property type="project" value="TreeGrafter"/>
</dbReference>
<dbReference type="GO" id="GO:0032993">
    <property type="term" value="C:protein-DNA complex"/>
    <property type="evidence" value="ECO:0007669"/>
    <property type="project" value="TreeGrafter"/>
</dbReference>
<dbReference type="GO" id="GO:0000156">
    <property type="term" value="F:phosphorelay response regulator activity"/>
    <property type="evidence" value="ECO:0007669"/>
    <property type="project" value="TreeGrafter"/>
</dbReference>
<dbReference type="GO" id="GO:0000976">
    <property type="term" value="F:transcription cis-regulatory region binding"/>
    <property type="evidence" value="ECO:0007669"/>
    <property type="project" value="TreeGrafter"/>
</dbReference>
<dbReference type="GO" id="GO:0006355">
    <property type="term" value="P:regulation of DNA-templated transcription"/>
    <property type="evidence" value="ECO:0007669"/>
    <property type="project" value="InterPro"/>
</dbReference>
<dbReference type="CDD" id="cd17574">
    <property type="entry name" value="REC_OmpR"/>
    <property type="match status" value="1"/>
</dbReference>
<dbReference type="CDD" id="cd00383">
    <property type="entry name" value="trans_reg_C"/>
    <property type="match status" value="1"/>
</dbReference>
<dbReference type="FunFam" id="3.40.50.2300:FF:000001">
    <property type="entry name" value="DNA-binding response regulator PhoB"/>
    <property type="match status" value="1"/>
</dbReference>
<dbReference type="FunFam" id="1.10.10.10:FF:000018">
    <property type="entry name" value="DNA-binding response regulator ResD"/>
    <property type="match status" value="1"/>
</dbReference>
<dbReference type="Gene3D" id="3.40.50.2300">
    <property type="match status" value="1"/>
</dbReference>
<dbReference type="Gene3D" id="6.10.250.690">
    <property type="match status" value="1"/>
</dbReference>
<dbReference type="Gene3D" id="1.10.10.10">
    <property type="entry name" value="Winged helix-like DNA-binding domain superfamily/Winged helix DNA-binding domain"/>
    <property type="match status" value="1"/>
</dbReference>
<dbReference type="InterPro" id="IPR011006">
    <property type="entry name" value="CheY-like_superfamily"/>
</dbReference>
<dbReference type="InterPro" id="IPR001867">
    <property type="entry name" value="OmpR/PhoB-type_DNA-bd"/>
</dbReference>
<dbReference type="InterPro" id="IPR001789">
    <property type="entry name" value="Sig_transdc_resp-reg_receiver"/>
</dbReference>
<dbReference type="InterPro" id="IPR039420">
    <property type="entry name" value="WalR-like"/>
</dbReference>
<dbReference type="InterPro" id="IPR036388">
    <property type="entry name" value="WH-like_DNA-bd_sf"/>
</dbReference>
<dbReference type="NCBIfam" id="NF045944">
    <property type="entry name" value="ResRegRpaBCyano"/>
    <property type="match status" value="1"/>
</dbReference>
<dbReference type="PANTHER" id="PTHR48111:SF65">
    <property type="entry name" value="OMPR SUBFAMILY"/>
    <property type="match status" value="1"/>
</dbReference>
<dbReference type="PANTHER" id="PTHR48111">
    <property type="entry name" value="REGULATOR OF RPOS"/>
    <property type="match status" value="1"/>
</dbReference>
<dbReference type="Pfam" id="PF00072">
    <property type="entry name" value="Response_reg"/>
    <property type="match status" value="1"/>
</dbReference>
<dbReference type="Pfam" id="PF00486">
    <property type="entry name" value="Trans_reg_C"/>
    <property type="match status" value="1"/>
</dbReference>
<dbReference type="SMART" id="SM00448">
    <property type="entry name" value="REC"/>
    <property type="match status" value="1"/>
</dbReference>
<dbReference type="SMART" id="SM00862">
    <property type="entry name" value="Trans_reg_C"/>
    <property type="match status" value="1"/>
</dbReference>
<dbReference type="SUPFAM" id="SSF52172">
    <property type="entry name" value="CheY-like"/>
    <property type="match status" value="1"/>
</dbReference>
<dbReference type="PROSITE" id="PS51755">
    <property type="entry name" value="OMPR_PHOB"/>
    <property type="match status" value="1"/>
</dbReference>
<dbReference type="PROSITE" id="PS50110">
    <property type="entry name" value="RESPONSE_REGULATORY"/>
    <property type="match status" value="1"/>
</dbReference>
<proteinExistence type="inferred from homology"/>
<protein>
    <recommendedName>
        <fullName>Probable transcriptional regulator ycf27</fullName>
    </recommendedName>
    <alternativeName>
        <fullName>OmpR-like protein</fullName>
    </alternativeName>
</protein>
<sequence length="239" mass="27109">MEINKKKILVVDDEISIRRILETRLSMIGYEVVTAADGEEALTIFQLEHPNLVVLDVMMPKLDGYGVCQELRKESDIPIIMLTALGDVADRITGLELGADDYVVKPFSPKELEARIRSLLRRTENPTLSTTSTNGENLQIGFLKIDINKRQVFKNGERIRLTGMEFSLLELLISKMGEPFSRAQILQEVWGYTPERHIDTRVVDVHISRLRSKLEENPSNPDLILTARGIGYLFQNTSN</sequence>
<geneLocation type="cyanelle"/>
<reference key="1">
    <citation type="journal article" date="1995" name="Plant Mol. Biol. Rep.">
        <title>Nucleotide sequence of the cyanelle DNA from Cyanophora paradoxa.</title>
        <authorList>
            <person name="Stirewalt V.L."/>
            <person name="Michalowski C.B."/>
            <person name="Loeffelhardt W."/>
            <person name="Bohnert H.J."/>
            <person name="Bryant D.A."/>
        </authorList>
    </citation>
    <scope>NUCLEOTIDE SEQUENCE [LARGE SCALE GENOMIC DNA]</scope>
    <source>
        <strain>UTEX LB 555 / Pringsheim</strain>
    </source>
</reference>
<reference key="2">
    <citation type="book" date="1997" name="Eukaryotism and symbiosis">
        <title>The complete sequence of the cyanelle genome of Cyanophora paradoxa: the genetic complexity of a primitive plastid.</title>
        <editorList>
            <person name="Schenk H.E.A."/>
            <person name="Herrmann R."/>
            <person name="Jeon K.W."/>
            <person name="Mueller N.E."/>
            <person name="Schwemmler W."/>
        </editorList>
        <authorList>
            <person name="Loeffelhardt W."/>
            <person name="Stirewalt V.L."/>
            <person name="Michalowski C.B."/>
            <person name="Annarella M."/>
            <person name="Farley J.Y."/>
            <person name="Schluchter W.M."/>
            <person name="Chung S."/>
            <person name="Newmann-Spallart C."/>
            <person name="Steiner J.M."/>
            <person name="Jakowitsch J."/>
            <person name="Bohnert H.J."/>
            <person name="Bryant D.A."/>
        </authorList>
    </citation>
    <scope>NUCLEOTIDE SEQUENCE [LARGE SCALE GENOMIC DNA]</scope>
    <source>
        <strain>UTEX LB 555 / Pringsheim</strain>
    </source>
</reference>
<evidence type="ECO:0000250" key="1"/>
<evidence type="ECO:0000255" key="2">
    <source>
        <dbReference type="PROSITE-ProRule" id="PRU00169"/>
    </source>
</evidence>
<evidence type="ECO:0000255" key="3">
    <source>
        <dbReference type="PROSITE-ProRule" id="PRU01091"/>
    </source>
</evidence>
<organism>
    <name type="scientific">Cyanophora paradoxa</name>
    <dbReference type="NCBI Taxonomy" id="2762"/>
    <lineage>
        <taxon>Eukaryota</taxon>
        <taxon>Glaucocystophyceae</taxon>
        <taxon>Cyanophoraceae</taxon>
        <taxon>Cyanophora</taxon>
    </lineage>
</organism>
<keyword id="KW-0194">Cyanelle</keyword>
<keyword id="KW-0238">DNA-binding</keyword>
<keyword id="KW-0597">Phosphoprotein</keyword>
<keyword id="KW-0934">Plastid</keyword>
<keyword id="KW-0804">Transcription</keyword>
<keyword id="KW-0805">Transcription regulation</keyword>
<keyword id="KW-0902">Two-component regulatory system</keyword>
<comment type="function">
    <text>Probable promoter-specific protein mediating the interaction between DNA and RNA polymerase.</text>
</comment>
<comment type="subcellular location">
    <subcellularLocation>
        <location>Plastid</location>
        <location>Cyanelle</location>
    </subcellularLocation>
</comment>
<gene>
    <name type="primary">ycf27</name>
</gene>
<feature type="chain" id="PRO_0000081348" description="Probable transcriptional regulator ycf27">
    <location>
        <begin position="1"/>
        <end position="239"/>
    </location>
</feature>
<feature type="domain" description="Response regulatory" evidence="2">
    <location>
        <begin position="7"/>
        <end position="120"/>
    </location>
</feature>
<feature type="DNA-binding region" description="H-T-H motif" evidence="1">
    <location>
        <begin position="76"/>
        <end position="94"/>
    </location>
</feature>
<feature type="DNA-binding region" description="OmpR/PhoB-type" evidence="3">
    <location>
        <begin position="135"/>
        <end position="236"/>
    </location>
</feature>
<feature type="modified residue" description="4-aspartylphosphate" evidence="2">
    <location>
        <position position="56"/>
    </location>
</feature>